<gene>
    <name evidence="1" type="primary">plsX</name>
    <name type="ordered locus">SPP_0101</name>
</gene>
<accession>C1CHU8</accession>
<organism>
    <name type="scientific">Streptococcus pneumoniae (strain P1031)</name>
    <dbReference type="NCBI Taxonomy" id="488223"/>
    <lineage>
        <taxon>Bacteria</taxon>
        <taxon>Bacillati</taxon>
        <taxon>Bacillota</taxon>
        <taxon>Bacilli</taxon>
        <taxon>Lactobacillales</taxon>
        <taxon>Streptococcaceae</taxon>
        <taxon>Streptococcus</taxon>
    </lineage>
</organism>
<evidence type="ECO:0000255" key="1">
    <source>
        <dbReference type="HAMAP-Rule" id="MF_00019"/>
    </source>
</evidence>
<dbReference type="EC" id="2.3.1.274" evidence="1"/>
<dbReference type="EMBL" id="CP000920">
    <property type="protein sequence ID" value="ACO20900.1"/>
    <property type="molecule type" value="Genomic_DNA"/>
</dbReference>
<dbReference type="RefSeq" id="WP_000717461.1">
    <property type="nucleotide sequence ID" value="NC_012467.1"/>
</dbReference>
<dbReference type="SMR" id="C1CHU8"/>
<dbReference type="GeneID" id="45652452"/>
<dbReference type="KEGG" id="spp:SPP_0101"/>
<dbReference type="HOGENOM" id="CLU_039379_1_1_9"/>
<dbReference type="UniPathway" id="UPA00085"/>
<dbReference type="GO" id="GO:0005737">
    <property type="term" value="C:cytoplasm"/>
    <property type="evidence" value="ECO:0007669"/>
    <property type="project" value="UniProtKB-SubCell"/>
</dbReference>
<dbReference type="GO" id="GO:0043811">
    <property type="term" value="F:phosphate:acyl-[acyl carrier protein] acyltransferase activity"/>
    <property type="evidence" value="ECO:0007669"/>
    <property type="project" value="UniProtKB-UniRule"/>
</dbReference>
<dbReference type="GO" id="GO:0006633">
    <property type="term" value="P:fatty acid biosynthetic process"/>
    <property type="evidence" value="ECO:0007669"/>
    <property type="project" value="UniProtKB-UniRule"/>
</dbReference>
<dbReference type="GO" id="GO:0008654">
    <property type="term" value="P:phospholipid biosynthetic process"/>
    <property type="evidence" value="ECO:0007669"/>
    <property type="project" value="UniProtKB-KW"/>
</dbReference>
<dbReference type="Gene3D" id="3.40.718.10">
    <property type="entry name" value="Isopropylmalate Dehydrogenase"/>
    <property type="match status" value="1"/>
</dbReference>
<dbReference type="HAMAP" id="MF_00019">
    <property type="entry name" value="PlsX"/>
    <property type="match status" value="1"/>
</dbReference>
<dbReference type="InterPro" id="IPR003664">
    <property type="entry name" value="FA_synthesis"/>
</dbReference>
<dbReference type="InterPro" id="IPR012281">
    <property type="entry name" value="Phospholipid_synth_PlsX-like"/>
</dbReference>
<dbReference type="NCBIfam" id="TIGR00182">
    <property type="entry name" value="plsX"/>
    <property type="match status" value="1"/>
</dbReference>
<dbReference type="PANTHER" id="PTHR30100">
    <property type="entry name" value="FATTY ACID/PHOSPHOLIPID SYNTHESIS PROTEIN PLSX"/>
    <property type="match status" value="1"/>
</dbReference>
<dbReference type="PANTHER" id="PTHR30100:SF1">
    <property type="entry name" value="PHOSPHATE ACYLTRANSFERASE"/>
    <property type="match status" value="1"/>
</dbReference>
<dbReference type="Pfam" id="PF02504">
    <property type="entry name" value="FA_synthesis"/>
    <property type="match status" value="1"/>
</dbReference>
<dbReference type="PIRSF" id="PIRSF002465">
    <property type="entry name" value="Phsphlp_syn_PlsX"/>
    <property type="match status" value="1"/>
</dbReference>
<dbReference type="SUPFAM" id="SSF53659">
    <property type="entry name" value="Isocitrate/Isopropylmalate dehydrogenase-like"/>
    <property type="match status" value="1"/>
</dbReference>
<keyword id="KW-0963">Cytoplasm</keyword>
<keyword id="KW-0444">Lipid biosynthesis</keyword>
<keyword id="KW-0443">Lipid metabolism</keyword>
<keyword id="KW-0594">Phospholipid biosynthesis</keyword>
<keyword id="KW-1208">Phospholipid metabolism</keyword>
<keyword id="KW-0808">Transferase</keyword>
<name>PLSX_STRZP</name>
<sequence length="330" mass="34960">MKKIAVDAMGGDYAPQAIVEGVNQALSDFSDIEVQLYGDEAKIKQYLTATERVSIIHTDEKIDSDDEPTRAIRNKKNASMVLAAKAVKDGEADAVLSAGNTGALLAAGFFIVGRIKNIDRPGLMSTLPTVDGKGFDMLDLGANAENTAQHLHQYAVLGSFYAKNVRGIAQPRVGLLNNGTESSKGDPLRKETYELLVADESLNFIGNVEARDLMNGVADVVVADGFTGNAVLKSIEGTAMGIMGLLKTAITGGGLRAKLGALLLKDSLRGLKKQLNYSDIGGAVLFGVKAPVVKTHGSSDAKAVYSTIRQIRTMLETDVVAQTAREFSGE</sequence>
<comment type="function">
    <text evidence="1">Catalyzes the reversible formation of acyl-phosphate (acyl-PO(4)) from acyl-[acyl-carrier-protein] (acyl-ACP). This enzyme utilizes acyl-ACP as fatty acyl donor, but not acyl-CoA.</text>
</comment>
<comment type="catalytic activity">
    <reaction evidence="1">
        <text>a fatty acyl-[ACP] + phosphate = an acyl phosphate + holo-[ACP]</text>
        <dbReference type="Rhea" id="RHEA:42292"/>
        <dbReference type="Rhea" id="RHEA-COMP:9685"/>
        <dbReference type="Rhea" id="RHEA-COMP:14125"/>
        <dbReference type="ChEBI" id="CHEBI:43474"/>
        <dbReference type="ChEBI" id="CHEBI:59918"/>
        <dbReference type="ChEBI" id="CHEBI:64479"/>
        <dbReference type="ChEBI" id="CHEBI:138651"/>
        <dbReference type="EC" id="2.3.1.274"/>
    </reaction>
</comment>
<comment type="pathway">
    <text evidence="1">Lipid metabolism; phospholipid metabolism.</text>
</comment>
<comment type="subunit">
    <text evidence="1">Homodimer. Probably interacts with PlsY.</text>
</comment>
<comment type="subcellular location">
    <subcellularLocation>
        <location evidence="1">Cytoplasm</location>
    </subcellularLocation>
    <text evidence="1">Associated with the membrane possibly through PlsY.</text>
</comment>
<comment type="similarity">
    <text evidence="1">Belongs to the PlsX family.</text>
</comment>
<feature type="chain" id="PRO_1000193150" description="Phosphate acyltransferase">
    <location>
        <begin position="1"/>
        <end position="330"/>
    </location>
</feature>
<protein>
    <recommendedName>
        <fullName evidence="1">Phosphate acyltransferase</fullName>
        <ecNumber evidence="1">2.3.1.274</ecNumber>
    </recommendedName>
    <alternativeName>
        <fullName evidence="1">Acyl-ACP phosphotransacylase</fullName>
    </alternativeName>
    <alternativeName>
        <fullName evidence="1">Acyl-[acyl-carrier-protein]--phosphate acyltransferase</fullName>
    </alternativeName>
    <alternativeName>
        <fullName evidence="1">Phosphate-acyl-ACP acyltransferase</fullName>
    </alternativeName>
</protein>
<reference key="1">
    <citation type="journal article" date="2010" name="Genome Biol.">
        <title>Structure and dynamics of the pan-genome of Streptococcus pneumoniae and closely related species.</title>
        <authorList>
            <person name="Donati C."/>
            <person name="Hiller N.L."/>
            <person name="Tettelin H."/>
            <person name="Muzzi A."/>
            <person name="Croucher N.J."/>
            <person name="Angiuoli S.V."/>
            <person name="Oggioni M."/>
            <person name="Dunning Hotopp J.C."/>
            <person name="Hu F.Z."/>
            <person name="Riley D.R."/>
            <person name="Covacci A."/>
            <person name="Mitchell T.J."/>
            <person name="Bentley S.D."/>
            <person name="Kilian M."/>
            <person name="Ehrlich G.D."/>
            <person name="Rappuoli R."/>
            <person name="Moxon E.R."/>
            <person name="Masignani V."/>
        </authorList>
    </citation>
    <scope>NUCLEOTIDE SEQUENCE [LARGE SCALE GENOMIC DNA]</scope>
    <source>
        <strain>P1031</strain>
    </source>
</reference>
<proteinExistence type="inferred from homology"/>